<comment type="function">
    <text evidence="6 9">Involved in neurogenesis of the adult central nervous system, and together with Cdc42, regulates photoreceptor cell morphogenesis. Phosphorylates exogenous substrates when activated by Cdc42.</text>
</comment>
<comment type="catalytic activity">
    <reaction evidence="6">
        <text>L-seryl-[protein] + ATP = O-phospho-L-seryl-[protein] + ADP + H(+)</text>
        <dbReference type="Rhea" id="RHEA:17989"/>
        <dbReference type="Rhea" id="RHEA-COMP:9863"/>
        <dbReference type="Rhea" id="RHEA-COMP:11604"/>
        <dbReference type="ChEBI" id="CHEBI:15378"/>
        <dbReference type="ChEBI" id="CHEBI:29999"/>
        <dbReference type="ChEBI" id="CHEBI:30616"/>
        <dbReference type="ChEBI" id="CHEBI:83421"/>
        <dbReference type="ChEBI" id="CHEBI:456216"/>
        <dbReference type="EC" id="2.7.11.1"/>
    </reaction>
</comment>
<comment type="catalytic activity">
    <reaction evidence="6">
        <text>L-threonyl-[protein] + ATP = O-phospho-L-threonyl-[protein] + ADP + H(+)</text>
        <dbReference type="Rhea" id="RHEA:46608"/>
        <dbReference type="Rhea" id="RHEA-COMP:11060"/>
        <dbReference type="Rhea" id="RHEA-COMP:11605"/>
        <dbReference type="ChEBI" id="CHEBI:15378"/>
        <dbReference type="ChEBI" id="CHEBI:30013"/>
        <dbReference type="ChEBI" id="CHEBI:30616"/>
        <dbReference type="ChEBI" id="CHEBI:61977"/>
        <dbReference type="ChEBI" id="CHEBI:456216"/>
        <dbReference type="EC" id="2.7.11.1"/>
    </reaction>
</comment>
<comment type="cofactor">
    <cofactor>
        <name>Mg(2+)</name>
        <dbReference type="ChEBI" id="CHEBI:18420"/>
    </cofactor>
</comment>
<comment type="subunit">
    <text evidence="6">Interacts tightly with GTP-bound but not GDP-bound Cdc42 and weakly with Rac1.</text>
</comment>
<comment type="interaction">
    <interactant intactId="EBI-75994">
        <id>Q9VXE5</id>
    </interactant>
    <interactant intactId="EBI-114324">
        <id>P40793</id>
        <label>Cdc42</label>
    </interactant>
    <organismsDiffer>false</organismsDiffer>
    <experiments>2</experiments>
</comment>
<comment type="subcellular location">
    <subcellularLocation>
        <location evidence="6">Cell junction</location>
        <location evidence="6">Adherens junction</location>
    </subcellularLocation>
    <subcellularLocation>
        <location evidence="6">Cell membrane</location>
        <topology evidence="6">Peripheral membrane protein</topology>
    </subcellularLocation>
    <text>Apical membrane sites of adherens junctions of developing photoreceptor cells.</text>
</comment>
<comment type="tissue specificity">
    <text evidence="6 9">Expressed in adult brain and eye. High levels detected in developing photoreceptor cells and future bristle cells, and lower levels in cone and pigment cells, as detected in third instar eye imaginal disks (at protein level).</text>
</comment>
<comment type="developmental stage">
    <text evidence="6 9">Expressed throughout development.</text>
</comment>
<comment type="PTM">
    <text evidence="6 8">Autophosphorylated when activated by Cdc42.</text>
</comment>
<comment type="disruption phenotype">
    <text evidence="9">In the adult brain of mutants, the calyx, peduncle and the lobe system of the mushroom bodies are reduced, along with other neuropil structures in the central brain. The Kenyon cell body layer above and behind the calyces is thinner. Additionally these mutants have a rough eye phenotype and bristle malformations.</text>
</comment>
<comment type="similarity">
    <text evidence="10">Belongs to the protein kinase superfamily. STE Ser/Thr protein kinase family. STE20 subfamily.</text>
</comment>
<protein>
    <recommendedName>
        <fullName>Serine/threonine-protein kinase PAK mbt</fullName>
        <ecNumber>2.7.11.1</ecNumber>
    </recommendedName>
    <alternativeName>
        <fullName>Protein mushroom bodies tiny</fullName>
    </alternativeName>
    <alternativeName>
        <fullName>p21-activated kinase-related protein</fullName>
    </alternativeName>
</protein>
<sequence>MFSKKKKKPLISMPSNFEHRVHTGFDKRENKYVGLPLQWASIVGNNQILKSSNRPLPLVDPSEITPTEILDLKTIVRPHHNNNKADTTSLNSSSTMMMGSMAPMNPMAPGAHPMMSHGPGMMMPPETGGIVLPKTSHVARSNSLRSSSPPRVRRVANVPPSVPEEEGPPAAGTPGVGGASSGGFKPPGAHPSLLYNSQHAHANGATGPLAVRTDQTNLQQYRSNLAPPSGGSMPQQQQTSPVGSVASGTRSNHSHTNNGNSGGSYPPMYPTSHQQQQQQQQQAKQGGDQNQNPLHPHAHPHPHHHQHLAKSASRASSSSGGASSAAQQASGASGGAAGQPKQDQRLTHEQFRAALQMVVSAGDPRENLDHFNKIGEGSTGTVCIATDKSTGRQVAVKKMDLRKQQRRELLFNEVVIMRDYHHPNIVETYSSFLVNDELWVVMEYLEGGALTDIVTHSRMDEEQIATVCKQCLKALAYLHSQGVIHRDIKSDSILLAADGRVKLSDFGFCAQVSQELPKRKSLVGTPYWMSPEVISRLPYGPEVDIWSLGIMVIEMVDGEPPFFNEPPLQAMRRIRDMQPPNLKNAHKVSPRLQSFLDRMLVRDPAQRATAAELLAHPFLRQAGPPSLLVPLMRNARHHP</sequence>
<organism>
    <name type="scientific">Drosophila melanogaster</name>
    <name type="common">Fruit fly</name>
    <dbReference type="NCBI Taxonomy" id="7227"/>
    <lineage>
        <taxon>Eukaryota</taxon>
        <taxon>Metazoa</taxon>
        <taxon>Ecdysozoa</taxon>
        <taxon>Arthropoda</taxon>
        <taxon>Hexapoda</taxon>
        <taxon>Insecta</taxon>
        <taxon>Pterygota</taxon>
        <taxon>Neoptera</taxon>
        <taxon>Endopterygota</taxon>
        <taxon>Diptera</taxon>
        <taxon>Brachycera</taxon>
        <taxon>Muscomorpha</taxon>
        <taxon>Ephydroidea</taxon>
        <taxon>Drosophilidae</taxon>
        <taxon>Drosophila</taxon>
        <taxon>Sophophora</taxon>
    </lineage>
</organism>
<keyword id="KW-0067">ATP-binding</keyword>
<keyword id="KW-0965">Cell junction</keyword>
<keyword id="KW-1003">Cell membrane</keyword>
<keyword id="KW-0217">Developmental protein</keyword>
<keyword id="KW-0221">Differentiation</keyword>
<keyword id="KW-0418">Kinase</keyword>
<keyword id="KW-0460">Magnesium</keyword>
<keyword id="KW-0472">Membrane</keyword>
<keyword id="KW-0524">Neurogenesis</keyword>
<keyword id="KW-0547">Nucleotide-binding</keyword>
<keyword id="KW-0597">Phosphoprotein</keyword>
<keyword id="KW-1185">Reference proteome</keyword>
<keyword id="KW-0723">Serine/threonine-protein kinase</keyword>
<keyword id="KW-0808">Transferase</keyword>
<gene>
    <name evidence="12" type="primary">mbt</name>
    <name type="ORF">CG18582</name>
</gene>
<accession>Q9VXE5</accession>
<accession>O96372</accession>
<accession>Q960J8</accession>
<accession>Q9TYH2</accession>
<proteinExistence type="evidence at protein level"/>
<feature type="chain" id="PRO_0000086479" description="Serine/threonine-protein kinase PAK mbt">
    <location>
        <begin position="1"/>
        <end position="639"/>
    </location>
</feature>
<feature type="domain" description="CRIB" evidence="2">
    <location>
        <begin position="11"/>
        <end position="24"/>
    </location>
</feature>
<feature type="domain" description="Protein kinase" evidence="3">
    <location>
        <begin position="368"/>
        <end position="619"/>
    </location>
</feature>
<feature type="region of interest" description="Linker">
    <location>
        <begin position="25"/>
        <end position="367"/>
    </location>
</feature>
<feature type="region of interest" description="Disordered" evidence="4">
    <location>
        <begin position="79"/>
        <end position="195"/>
    </location>
</feature>
<feature type="region of interest" description="Disordered" evidence="4">
    <location>
        <begin position="222"/>
        <end position="345"/>
    </location>
</feature>
<feature type="compositionally biased region" description="Low complexity" evidence="4">
    <location>
        <begin position="91"/>
        <end position="129"/>
    </location>
</feature>
<feature type="compositionally biased region" description="Low complexity" evidence="4">
    <location>
        <begin position="138"/>
        <end position="159"/>
    </location>
</feature>
<feature type="compositionally biased region" description="Low complexity" evidence="4">
    <location>
        <begin position="227"/>
        <end position="241"/>
    </location>
</feature>
<feature type="compositionally biased region" description="Low complexity" evidence="4">
    <location>
        <begin position="274"/>
        <end position="295"/>
    </location>
</feature>
<feature type="compositionally biased region" description="Basic residues" evidence="4">
    <location>
        <begin position="296"/>
        <end position="308"/>
    </location>
</feature>
<feature type="compositionally biased region" description="Low complexity" evidence="4">
    <location>
        <begin position="309"/>
        <end position="331"/>
    </location>
</feature>
<feature type="active site" description="Proton acceptor" evidence="1 3">
    <location>
        <position position="487"/>
    </location>
</feature>
<feature type="binding site" evidence="1 3">
    <location>
        <begin position="374"/>
        <end position="382"/>
    </location>
    <ligand>
        <name>ATP</name>
        <dbReference type="ChEBI" id="CHEBI:30616"/>
    </ligand>
</feature>
<feature type="binding site" evidence="1 3">
    <location>
        <position position="397"/>
    </location>
    <ligand>
        <name>ATP</name>
        <dbReference type="ChEBI" id="CHEBI:30616"/>
    </ligand>
</feature>
<feature type="modified residue" description="Phosphoserine" evidence="8">
    <location>
        <position position="521"/>
    </location>
</feature>
<feature type="modified residue" description="Phosphothreonine" evidence="8">
    <location>
        <position position="525"/>
    </location>
</feature>
<feature type="mutagenesis site" description="Inhibits binding to Cdc42; when associated with L-22." evidence="6">
    <original>H</original>
    <variation>L</variation>
    <location>
        <position position="19"/>
    </location>
</feature>
<feature type="mutagenesis site" description="Inhibits binding to Cdc42; when associated with L-19." evidence="6">
    <original>H</original>
    <variation>L</variation>
    <location>
        <position position="22"/>
    </location>
</feature>
<feature type="mutagenesis site" description="Strongly reduces autophosphorylation and substrate phosphorylation." evidence="6">
    <original>T</original>
    <variation>A</variation>
    <location>
        <position position="525"/>
    </location>
</feature>
<feature type="sequence conflict" description="In Ref. 5; AAK93447." evidence="10" ref="5">
    <original>V</original>
    <variation>A</variation>
    <location>
        <position position="394"/>
    </location>
</feature>
<feature type="sequence conflict" description="In Ref. 2; AAD01935." evidence="10" ref="2">
    <original>L</original>
    <variation>F</variation>
    <location>
        <position position="596"/>
    </location>
</feature>
<name>PAKM_DROME</name>
<evidence type="ECO:0000250" key="1">
    <source>
        <dbReference type="UniProtKB" id="O96013"/>
    </source>
</evidence>
<evidence type="ECO:0000255" key="2">
    <source>
        <dbReference type="PROSITE-ProRule" id="PRU00057"/>
    </source>
</evidence>
<evidence type="ECO:0000255" key="3">
    <source>
        <dbReference type="PROSITE-ProRule" id="PRU00159"/>
    </source>
</evidence>
<evidence type="ECO:0000256" key="4">
    <source>
        <dbReference type="SAM" id="MobiDB-lite"/>
    </source>
</evidence>
<evidence type="ECO:0000269" key="5">
    <source>
    </source>
</evidence>
<evidence type="ECO:0000269" key="6">
    <source>
    </source>
</evidence>
<evidence type="ECO:0000269" key="7">
    <source>
    </source>
</evidence>
<evidence type="ECO:0000269" key="8">
    <source>
    </source>
</evidence>
<evidence type="ECO:0000269" key="9">
    <source>
    </source>
</evidence>
<evidence type="ECO:0000305" key="10"/>
<evidence type="ECO:0000312" key="11">
    <source>
        <dbReference type="EMBL" id="AAD01935.1"/>
    </source>
</evidence>
<evidence type="ECO:0000312" key="12">
    <source>
        <dbReference type="EMBL" id="AAF48629.2"/>
    </source>
</evidence>
<evidence type="ECO:0000312" key="13">
    <source>
        <dbReference type="EMBL" id="AAK93447.1"/>
    </source>
</evidence>
<evidence type="ECO:0000312" key="14">
    <source>
        <dbReference type="EMBL" id="CAA09699.1"/>
    </source>
</evidence>
<dbReference type="EC" id="2.7.11.1"/>
<dbReference type="EMBL" id="AJ011578">
    <property type="protein sequence ID" value="CAA09699.1"/>
    <property type="molecule type" value="mRNA"/>
</dbReference>
<dbReference type="EMBL" id="AF031517">
    <property type="protein sequence ID" value="AAD01935.1"/>
    <property type="molecule type" value="mRNA"/>
</dbReference>
<dbReference type="EMBL" id="AE014298">
    <property type="protein sequence ID" value="AAF48629.2"/>
    <property type="molecule type" value="Genomic_DNA"/>
</dbReference>
<dbReference type="EMBL" id="AY052023">
    <property type="protein sequence ID" value="AAK93447.1"/>
    <property type="molecule type" value="mRNA"/>
</dbReference>
<dbReference type="RefSeq" id="NP_523375.2">
    <property type="nucleotide sequence ID" value="NM_078651.4"/>
</dbReference>
<dbReference type="SMR" id="Q9VXE5"/>
<dbReference type="BioGRID" id="58968">
    <property type="interactions" value="27"/>
</dbReference>
<dbReference type="DIP" id="DIP-20519N"/>
<dbReference type="FunCoup" id="Q9VXE5">
    <property type="interactions" value="1006"/>
</dbReference>
<dbReference type="IntAct" id="Q9VXE5">
    <property type="interactions" value="11"/>
</dbReference>
<dbReference type="STRING" id="7227.FBpp0074060"/>
<dbReference type="GlyGen" id="Q9VXE5">
    <property type="glycosylation" value="1 site"/>
</dbReference>
<dbReference type="iPTMnet" id="Q9VXE5"/>
<dbReference type="PaxDb" id="7227-FBpp0074060"/>
<dbReference type="DNASU" id="32631"/>
<dbReference type="EnsemblMetazoa" id="FBtr0074285">
    <property type="protein sequence ID" value="FBpp0074060"/>
    <property type="gene ID" value="FBgn0025743"/>
</dbReference>
<dbReference type="GeneID" id="32631"/>
<dbReference type="KEGG" id="dme:Dmel_CG18582"/>
<dbReference type="AGR" id="FB:FBgn0025743"/>
<dbReference type="CTD" id="32631"/>
<dbReference type="FlyBase" id="FBgn0025743">
    <property type="gene designation" value="mbt"/>
</dbReference>
<dbReference type="VEuPathDB" id="VectorBase:FBgn0025743"/>
<dbReference type="eggNOG" id="KOG0578">
    <property type="taxonomic scope" value="Eukaryota"/>
</dbReference>
<dbReference type="GeneTree" id="ENSGT00940000169130"/>
<dbReference type="HOGENOM" id="CLU_000288_26_6_1"/>
<dbReference type="InParanoid" id="Q9VXE5"/>
<dbReference type="OMA" id="YPMYPAS"/>
<dbReference type="OrthoDB" id="1022360at2759"/>
<dbReference type="PhylomeDB" id="Q9VXE5"/>
<dbReference type="Reactome" id="R-DME-9013149">
    <property type="pathway name" value="RAC1 GTPase cycle"/>
</dbReference>
<dbReference type="Reactome" id="R-DME-9013404">
    <property type="pathway name" value="RAC2 GTPase cycle"/>
</dbReference>
<dbReference type="Reactome" id="R-DME-9013405">
    <property type="pathway name" value="RHOD GTPase cycle"/>
</dbReference>
<dbReference type="Reactome" id="R-DME-9013406">
    <property type="pathway name" value="RHOQ GTPase cycle"/>
</dbReference>
<dbReference type="Reactome" id="R-DME-9013407">
    <property type="pathway name" value="RHOH GTPase cycle"/>
</dbReference>
<dbReference type="Reactome" id="R-DME-9013408">
    <property type="pathway name" value="RHOG GTPase cycle"/>
</dbReference>
<dbReference type="Reactome" id="R-DME-9013420">
    <property type="pathway name" value="RHOU GTPase cycle"/>
</dbReference>
<dbReference type="Reactome" id="R-DME-9013423">
    <property type="pathway name" value="RAC3 GTPase cycle"/>
</dbReference>
<dbReference type="Reactome" id="R-DME-9013424">
    <property type="pathway name" value="RHOV GTPase cycle"/>
</dbReference>
<dbReference type="SignaLink" id="Q9VXE5"/>
<dbReference type="BioGRID-ORCS" id="32631">
    <property type="hits" value="0 hits in 3 CRISPR screens"/>
</dbReference>
<dbReference type="GenomeRNAi" id="32631"/>
<dbReference type="PRO" id="PR:Q9VXE5"/>
<dbReference type="Proteomes" id="UP000000803">
    <property type="component" value="Chromosome X"/>
</dbReference>
<dbReference type="Bgee" id="FBgn0025743">
    <property type="expression patterns" value="Expressed in germline cell (Drosophila) in post-embryonic organism and 247 other cell types or tissues"/>
</dbReference>
<dbReference type="ExpressionAtlas" id="Q9VXE5">
    <property type="expression patterns" value="baseline and differential"/>
</dbReference>
<dbReference type="GO" id="GO:0005912">
    <property type="term" value="C:adherens junction"/>
    <property type="evidence" value="ECO:0000314"/>
    <property type="project" value="UniProtKB"/>
</dbReference>
<dbReference type="GO" id="GO:0005737">
    <property type="term" value="C:cytoplasm"/>
    <property type="evidence" value="ECO:0000314"/>
    <property type="project" value="FlyBase"/>
</dbReference>
<dbReference type="GO" id="GO:0005886">
    <property type="term" value="C:plasma membrane"/>
    <property type="evidence" value="ECO:0007669"/>
    <property type="project" value="UniProtKB-SubCell"/>
</dbReference>
<dbReference type="GO" id="GO:0005524">
    <property type="term" value="F:ATP binding"/>
    <property type="evidence" value="ECO:0000315"/>
    <property type="project" value="UniProtKB"/>
</dbReference>
<dbReference type="GO" id="GO:0004672">
    <property type="term" value="F:protein kinase activity"/>
    <property type="evidence" value="ECO:0000314"/>
    <property type="project" value="FlyBase"/>
</dbReference>
<dbReference type="GO" id="GO:0106310">
    <property type="term" value="F:protein serine kinase activity"/>
    <property type="evidence" value="ECO:0007669"/>
    <property type="project" value="RHEA"/>
</dbReference>
<dbReference type="GO" id="GO:0004674">
    <property type="term" value="F:protein serine/threonine kinase activity"/>
    <property type="evidence" value="ECO:0000314"/>
    <property type="project" value="FlyBase"/>
</dbReference>
<dbReference type="GO" id="GO:0031267">
    <property type="term" value="F:small GTPase binding"/>
    <property type="evidence" value="ECO:0000353"/>
    <property type="project" value="FlyBase"/>
</dbReference>
<dbReference type="GO" id="GO:0009267">
    <property type="term" value="P:cellular response to starvation"/>
    <property type="evidence" value="ECO:0000318"/>
    <property type="project" value="GO_Central"/>
</dbReference>
<dbReference type="GO" id="GO:0048749">
    <property type="term" value="P:compound eye development"/>
    <property type="evidence" value="ECO:0000315"/>
    <property type="project" value="FlyBase"/>
</dbReference>
<dbReference type="GO" id="GO:0001751">
    <property type="term" value="P:compound eye photoreceptor cell differentiation"/>
    <property type="evidence" value="ECO:0000315"/>
    <property type="project" value="UniProtKB"/>
</dbReference>
<dbReference type="GO" id="GO:0007010">
    <property type="term" value="P:cytoskeleton organization"/>
    <property type="evidence" value="ECO:0000304"/>
    <property type="project" value="UniProtKB"/>
</dbReference>
<dbReference type="GO" id="GO:0007030">
    <property type="term" value="P:Golgi organization"/>
    <property type="evidence" value="ECO:0000315"/>
    <property type="project" value="FlyBase"/>
</dbReference>
<dbReference type="GO" id="GO:0035556">
    <property type="term" value="P:intracellular signal transduction"/>
    <property type="evidence" value="ECO:0000318"/>
    <property type="project" value="GO_Central"/>
</dbReference>
<dbReference type="GO" id="GO:0016319">
    <property type="term" value="P:mushroom body development"/>
    <property type="evidence" value="ECO:0000315"/>
    <property type="project" value="UniProtKB"/>
</dbReference>
<dbReference type="GO" id="GO:0045792">
    <property type="term" value="P:negative regulation of cell size"/>
    <property type="evidence" value="ECO:0000315"/>
    <property type="project" value="FlyBase"/>
</dbReference>
<dbReference type="GO" id="GO:0045315">
    <property type="term" value="P:positive regulation of compound eye photoreceptor development"/>
    <property type="evidence" value="ECO:0000315"/>
    <property type="project" value="UniProtKB"/>
</dbReference>
<dbReference type="GO" id="GO:0048639">
    <property type="term" value="P:positive regulation of developmental growth"/>
    <property type="evidence" value="ECO:0000315"/>
    <property type="project" value="FlyBase"/>
</dbReference>
<dbReference type="GO" id="GO:0006468">
    <property type="term" value="P:protein phosphorylation"/>
    <property type="evidence" value="ECO:0000315"/>
    <property type="project" value="UniProtKB"/>
</dbReference>
<dbReference type="GO" id="GO:2000047">
    <property type="term" value="P:regulation of cell-cell adhesion mediated by cadherin"/>
    <property type="evidence" value="ECO:0000315"/>
    <property type="project" value="FlyBase"/>
</dbReference>
<dbReference type="GO" id="GO:0043408">
    <property type="term" value="P:regulation of MAPK cascade"/>
    <property type="evidence" value="ECO:0000315"/>
    <property type="project" value="UniProtKB"/>
</dbReference>
<dbReference type="CDD" id="cd01093">
    <property type="entry name" value="CRIB_PAK_like"/>
    <property type="match status" value="1"/>
</dbReference>
<dbReference type="CDD" id="cd06648">
    <property type="entry name" value="STKc_PAK_II"/>
    <property type="match status" value="1"/>
</dbReference>
<dbReference type="FunFam" id="1.10.510.10:FF:000073">
    <property type="entry name" value="Non-specific serine/threonine protein kinase"/>
    <property type="match status" value="1"/>
</dbReference>
<dbReference type="FunFam" id="3.30.200.20:FF:000141">
    <property type="entry name" value="Non-specific serine/threonine protein kinase"/>
    <property type="match status" value="1"/>
</dbReference>
<dbReference type="FunFam" id="3.90.810.10:FF:000002">
    <property type="entry name" value="Non-specific serine/threonine protein kinase"/>
    <property type="match status" value="1"/>
</dbReference>
<dbReference type="Gene3D" id="3.90.810.10">
    <property type="entry name" value="CRIB domain"/>
    <property type="match status" value="1"/>
</dbReference>
<dbReference type="Gene3D" id="3.30.200.20">
    <property type="entry name" value="Phosphorylase Kinase, domain 1"/>
    <property type="match status" value="1"/>
</dbReference>
<dbReference type="Gene3D" id="1.10.510.10">
    <property type="entry name" value="Transferase(Phosphotransferase) domain 1"/>
    <property type="match status" value="1"/>
</dbReference>
<dbReference type="InterPro" id="IPR000095">
    <property type="entry name" value="CRIB_dom"/>
</dbReference>
<dbReference type="InterPro" id="IPR036936">
    <property type="entry name" value="CRIB_dom_sf"/>
</dbReference>
<dbReference type="InterPro" id="IPR011009">
    <property type="entry name" value="Kinase-like_dom_sf"/>
</dbReference>
<dbReference type="InterPro" id="IPR051931">
    <property type="entry name" value="PAK3-like"/>
</dbReference>
<dbReference type="InterPro" id="IPR033923">
    <property type="entry name" value="PAK_BD"/>
</dbReference>
<dbReference type="InterPro" id="IPR000719">
    <property type="entry name" value="Prot_kinase_dom"/>
</dbReference>
<dbReference type="InterPro" id="IPR017441">
    <property type="entry name" value="Protein_kinase_ATP_BS"/>
</dbReference>
<dbReference type="PANTHER" id="PTHR45832:SF8">
    <property type="entry name" value="PROTEIN KINASE DOMAIN-CONTAINING PROTEIN"/>
    <property type="match status" value="1"/>
</dbReference>
<dbReference type="PANTHER" id="PTHR45832">
    <property type="entry name" value="SERINE/THREONINE-PROTEIN KINASE SAMKA-RELATED-RELATED"/>
    <property type="match status" value="1"/>
</dbReference>
<dbReference type="Pfam" id="PF00786">
    <property type="entry name" value="PBD"/>
    <property type="match status" value="1"/>
</dbReference>
<dbReference type="Pfam" id="PF00069">
    <property type="entry name" value="Pkinase"/>
    <property type="match status" value="1"/>
</dbReference>
<dbReference type="SMART" id="SM00285">
    <property type="entry name" value="PBD"/>
    <property type="match status" value="1"/>
</dbReference>
<dbReference type="SUPFAM" id="SSF56112">
    <property type="entry name" value="Protein kinase-like (PK-like)"/>
    <property type="match status" value="1"/>
</dbReference>
<dbReference type="PROSITE" id="PS50108">
    <property type="entry name" value="CRIB"/>
    <property type="match status" value="1"/>
</dbReference>
<dbReference type="PROSITE" id="PS00107">
    <property type="entry name" value="PROTEIN_KINASE_ATP"/>
    <property type="match status" value="1"/>
</dbReference>
<dbReference type="PROSITE" id="PS50011">
    <property type="entry name" value="PROTEIN_KINASE_DOM"/>
    <property type="match status" value="1"/>
</dbReference>
<reference evidence="10 14" key="1">
    <citation type="journal article" date="1998" name="Curr. Biol.">
        <title>A protein related to p21-activated kinase (PAK) that is involved in neurogenesis in the Drosophila adult central nervous system.</title>
        <authorList>
            <person name="Melzig J."/>
            <person name="Rein K.-H."/>
            <person name="Schaefer U."/>
            <person name="Pfister H."/>
            <person name="Jaeckle H."/>
            <person name="Heisenberg M."/>
            <person name="Raabe T."/>
        </authorList>
    </citation>
    <scope>NUCLEOTIDE SEQUENCE [MRNA]</scope>
    <scope>FUNCTION</scope>
    <scope>TISSUE SPECIFICITY</scope>
    <scope>DEVELOPMENTAL STAGE</scope>
    <scope>DISRUPTION PHENOTYPE</scope>
    <source>
        <tissue evidence="9">Embryo</tissue>
    </source>
</reference>
<reference evidence="11" key="2">
    <citation type="submission" date="1997-10" db="EMBL/GenBank/DDBJ databases">
        <title>New Drosophila member of the Ste20 serine/threonine kinase family.</title>
        <authorList>
            <person name="Melnick M.B."/>
        </authorList>
    </citation>
    <scope>NUCLEOTIDE SEQUENCE [MRNA]</scope>
</reference>
<reference evidence="12" key="3">
    <citation type="journal article" date="2000" name="Science">
        <title>The genome sequence of Drosophila melanogaster.</title>
        <authorList>
            <person name="Adams M.D."/>
            <person name="Celniker S.E."/>
            <person name="Holt R.A."/>
            <person name="Evans C.A."/>
            <person name="Gocayne J.D."/>
            <person name="Amanatides P.G."/>
            <person name="Scherer S.E."/>
            <person name="Li P.W."/>
            <person name="Hoskins R.A."/>
            <person name="Galle R.F."/>
            <person name="George R.A."/>
            <person name="Lewis S.E."/>
            <person name="Richards S."/>
            <person name="Ashburner M."/>
            <person name="Henderson S.N."/>
            <person name="Sutton G.G."/>
            <person name="Wortman J.R."/>
            <person name="Yandell M.D."/>
            <person name="Zhang Q."/>
            <person name="Chen L.X."/>
            <person name="Brandon R.C."/>
            <person name="Rogers Y.-H.C."/>
            <person name="Blazej R.G."/>
            <person name="Champe M."/>
            <person name="Pfeiffer B.D."/>
            <person name="Wan K.H."/>
            <person name="Doyle C."/>
            <person name="Baxter E.G."/>
            <person name="Helt G."/>
            <person name="Nelson C.R."/>
            <person name="Miklos G.L.G."/>
            <person name="Abril J.F."/>
            <person name="Agbayani A."/>
            <person name="An H.-J."/>
            <person name="Andrews-Pfannkoch C."/>
            <person name="Baldwin D."/>
            <person name="Ballew R.M."/>
            <person name="Basu A."/>
            <person name="Baxendale J."/>
            <person name="Bayraktaroglu L."/>
            <person name="Beasley E.M."/>
            <person name="Beeson K.Y."/>
            <person name="Benos P.V."/>
            <person name="Berman B.P."/>
            <person name="Bhandari D."/>
            <person name="Bolshakov S."/>
            <person name="Borkova D."/>
            <person name="Botchan M.R."/>
            <person name="Bouck J."/>
            <person name="Brokstein P."/>
            <person name="Brottier P."/>
            <person name="Burtis K.C."/>
            <person name="Busam D.A."/>
            <person name="Butler H."/>
            <person name="Cadieu E."/>
            <person name="Center A."/>
            <person name="Chandra I."/>
            <person name="Cherry J.M."/>
            <person name="Cawley S."/>
            <person name="Dahlke C."/>
            <person name="Davenport L.B."/>
            <person name="Davies P."/>
            <person name="de Pablos B."/>
            <person name="Delcher A."/>
            <person name="Deng Z."/>
            <person name="Mays A.D."/>
            <person name="Dew I."/>
            <person name="Dietz S.M."/>
            <person name="Dodson K."/>
            <person name="Doup L.E."/>
            <person name="Downes M."/>
            <person name="Dugan-Rocha S."/>
            <person name="Dunkov B.C."/>
            <person name="Dunn P."/>
            <person name="Durbin K.J."/>
            <person name="Evangelista C.C."/>
            <person name="Ferraz C."/>
            <person name="Ferriera S."/>
            <person name="Fleischmann W."/>
            <person name="Fosler C."/>
            <person name="Gabrielian A.E."/>
            <person name="Garg N.S."/>
            <person name="Gelbart W.M."/>
            <person name="Glasser K."/>
            <person name="Glodek A."/>
            <person name="Gong F."/>
            <person name="Gorrell J.H."/>
            <person name="Gu Z."/>
            <person name="Guan P."/>
            <person name="Harris M."/>
            <person name="Harris N.L."/>
            <person name="Harvey D.A."/>
            <person name="Heiman T.J."/>
            <person name="Hernandez J.R."/>
            <person name="Houck J."/>
            <person name="Hostin D."/>
            <person name="Houston K.A."/>
            <person name="Howland T.J."/>
            <person name="Wei M.-H."/>
            <person name="Ibegwam C."/>
            <person name="Jalali M."/>
            <person name="Kalush F."/>
            <person name="Karpen G.H."/>
            <person name="Ke Z."/>
            <person name="Kennison J.A."/>
            <person name="Ketchum K.A."/>
            <person name="Kimmel B.E."/>
            <person name="Kodira C.D."/>
            <person name="Kraft C.L."/>
            <person name="Kravitz S."/>
            <person name="Kulp D."/>
            <person name="Lai Z."/>
            <person name="Lasko P."/>
            <person name="Lei Y."/>
            <person name="Levitsky A.A."/>
            <person name="Li J.H."/>
            <person name="Li Z."/>
            <person name="Liang Y."/>
            <person name="Lin X."/>
            <person name="Liu X."/>
            <person name="Mattei B."/>
            <person name="McIntosh T.C."/>
            <person name="McLeod M.P."/>
            <person name="McPherson D."/>
            <person name="Merkulov G."/>
            <person name="Milshina N.V."/>
            <person name="Mobarry C."/>
            <person name="Morris J."/>
            <person name="Moshrefi A."/>
            <person name="Mount S.M."/>
            <person name="Moy M."/>
            <person name="Murphy B."/>
            <person name="Murphy L."/>
            <person name="Muzny D.M."/>
            <person name="Nelson D.L."/>
            <person name="Nelson D.R."/>
            <person name="Nelson K.A."/>
            <person name="Nixon K."/>
            <person name="Nusskern D.R."/>
            <person name="Pacleb J.M."/>
            <person name="Palazzolo M."/>
            <person name="Pittman G.S."/>
            <person name="Pan S."/>
            <person name="Pollard J."/>
            <person name="Puri V."/>
            <person name="Reese M.G."/>
            <person name="Reinert K."/>
            <person name="Remington K."/>
            <person name="Saunders R.D.C."/>
            <person name="Scheeler F."/>
            <person name="Shen H."/>
            <person name="Shue B.C."/>
            <person name="Siden-Kiamos I."/>
            <person name="Simpson M."/>
            <person name="Skupski M.P."/>
            <person name="Smith T.J."/>
            <person name="Spier E."/>
            <person name="Spradling A.C."/>
            <person name="Stapleton M."/>
            <person name="Strong R."/>
            <person name="Sun E."/>
            <person name="Svirskas R."/>
            <person name="Tector C."/>
            <person name="Turner R."/>
            <person name="Venter E."/>
            <person name="Wang A.H."/>
            <person name="Wang X."/>
            <person name="Wang Z.-Y."/>
            <person name="Wassarman D.A."/>
            <person name="Weinstock G.M."/>
            <person name="Weissenbach J."/>
            <person name="Williams S.M."/>
            <person name="Woodage T."/>
            <person name="Worley K.C."/>
            <person name="Wu D."/>
            <person name="Yang S."/>
            <person name="Yao Q.A."/>
            <person name="Ye J."/>
            <person name="Yeh R.-F."/>
            <person name="Zaveri J.S."/>
            <person name="Zhan M."/>
            <person name="Zhang G."/>
            <person name="Zhao Q."/>
            <person name="Zheng L."/>
            <person name="Zheng X.H."/>
            <person name="Zhong F.N."/>
            <person name="Zhong W."/>
            <person name="Zhou X."/>
            <person name="Zhu S.C."/>
            <person name="Zhu X."/>
            <person name="Smith H.O."/>
            <person name="Gibbs R.A."/>
            <person name="Myers E.W."/>
            <person name="Rubin G.M."/>
            <person name="Venter J.C."/>
        </authorList>
    </citation>
    <scope>NUCLEOTIDE SEQUENCE [LARGE SCALE GENOMIC DNA]</scope>
    <source>
        <strain evidence="5">Berkeley</strain>
    </source>
</reference>
<reference evidence="10 12" key="4">
    <citation type="journal article" date="2002" name="Genome Biol.">
        <title>Annotation of the Drosophila melanogaster euchromatic genome: a systematic review.</title>
        <authorList>
            <person name="Misra S."/>
            <person name="Crosby M.A."/>
            <person name="Mungall C.J."/>
            <person name="Matthews B.B."/>
            <person name="Campbell K.S."/>
            <person name="Hradecky P."/>
            <person name="Huang Y."/>
            <person name="Kaminker J.S."/>
            <person name="Millburn G.H."/>
            <person name="Prochnik S.E."/>
            <person name="Smith C.D."/>
            <person name="Tupy J.L."/>
            <person name="Whitfield E.J."/>
            <person name="Bayraktaroglu L."/>
            <person name="Berman B.P."/>
            <person name="Bettencourt B.R."/>
            <person name="Celniker S.E."/>
            <person name="de Grey A.D.N.J."/>
            <person name="Drysdale R.A."/>
            <person name="Harris N.L."/>
            <person name="Richter J."/>
            <person name="Russo S."/>
            <person name="Schroeder A.J."/>
            <person name="Shu S.Q."/>
            <person name="Stapleton M."/>
            <person name="Yamada C."/>
            <person name="Ashburner M."/>
            <person name="Gelbart W.M."/>
            <person name="Rubin G.M."/>
            <person name="Lewis S.E."/>
        </authorList>
    </citation>
    <scope>GENOME REANNOTATION</scope>
    <source>
        <strain>Berkeley</strain>
    </source>
</reference>
<reference evidence="13" key="5">
    <citation type="journal article" date="2002" name="Genome Biol.">
        <title>A Drosophila full-length cDNA resource.</title>
        <authorList>
            <person name="Stapleton M."/>
            <person name="Carlson J.W."/>
            <person name="Brokstein P."/>
            <person name="Yu C."/>
            <person name="Champe M."/>
            <person name="George R.A."/>
            <person name="Guarin H."/>
            <person name="Kronmiller B."/>
            <person name="Pacleb J.M."/>
            <person name="Park S."/>
            <person name="Wan K.H."/>
            <person name="Rubin G.M."/>
            <person name="Celniker S.E."/>
        </authorList>
    </citation>
    <scope>NUCLEOTIDE SEQUENCE [LARGE SCALE MRNA]</scope>
    <source>
        <strain evidence="13">Berkeley</strain>
        <tissue evidence="7">Embryo</tissue>
    </source>
</reference>
<reference evidence="10" key="6">
    <citation type="journal article" date="2003" name="Development">
        <title>Mbt, a Drosophila PAK protein, combines with Cdc42 to regulate photoreceptor cell morphogenesis.</title>
        <authorList>
            <person name="Schneeberger D."/>
            <person name="Raabe T."/>
        </authorList>
    </citation>
    <scope>FUNCTION</scope>
    <scope>INTERACTION WITH CDC42</scope>
    <scope>SUBCELLULAR LOCATION</scope>
    <scope>TISSUE SPECIFICITY</scope>
    <scope>DEVELOPMENTAL STAGE</scope>
    <scope>MUTAGENESIS OF HIS-19; HIS-22 AND THR-525</scope>
</reference>
<reference key="7">
    <citation type="journal article" date="2008" name="J. Proteome Res.">
        <title>Phosphoproteome analysis of Drosophila melanogaster embryos.</title>
        <authorList>
            <person name="Zhai B."/>
            <person name="Villen J."/>
            <person name="Beausoleil S.A."/>
            <person name="Mintseris J."/>
            <person name="Gygi S.P."/>
        </authorList>
    </citation>
    <scope>PHOSPHORYLATION [LARGE SCALE ANALYSIS] AT SER-521 AND THR-525</scope>
    <scope>IDENTIFICATION BY MASS SPECTROMETRY</scope>
    <source>
        <tissue>Embryo</tissue>
    </source>
</reference>